<gene>
    <name evidence="1" type="primary">rplL</name>
    <name type="ordered locus">Tpet_0463</name>
</gene>
<comment type="function">
    <text evidence="1">Forms part of the ribosomal stalk which helps the ribosome interact with GTP-bound translation factors. Is thus essential for accurate translation.</text>
</comment>
<comment type="subunit">
    <text evidence="1">Homodimer. Part of the ribosomal stalk of the 50S ribosomal subunit. Forms a multimeric L10(L12)X complex, where L10 forms an elongated spine to which 2 to 4 L12 dimers bind in a sequential fashion. Binds GTP-bound translation factors.</text>
</comment>
<comment type="similarity">
    <text evidence="1">Belongs to the bacterial ribosomal protein bL12 family.</text>
</comment>
<proteinExistence type="inferred from homology"/>
<accession>A5IJW4</accession>
<dbReference type="EMBL" id="CP000702">
    <property type="protein sequence ID" value="ABQ46487.1"/>
    <property type="molecule type" value="Genomic_DNA"/>
</dbReference>
<dbReference type="RefSeq" id="WP_011943105.1">
    <property type="nucleotide sequence ID" value="NC_009486.1"/>
</dbReference>
<dbReference type="SMR" id="A5IJW4"/>
<dbReference type="STRING" id="390874.Tpet_0463"/>
<dbReference type="KEGG" id="tpt:Tpet_0463"/>
<dbReference type="eggNOG" id="COG0222">
    <property type="taxonomic scope" value="Bacteria"/>
</dbReference>
<dbReference type="HOGENOM" id="CLU_086499_3_2_0"/>
<dbReference type="Proteomes" id="UP000006558">
    <property type="component" value="Chromosome"/>
</dbReference>
<dbReference type="GO" id="GO:0022625">
    <property type="term" value="C:cytosolic large ribosomal subunit"/>
    <property type="evidence" value="ECO:0007669"/>
    <property type="project" value="TreeGrafter"/>
</dbReference>
<dbReference type="GO" id="GO:0003729">
    <property type="term" value="F:mRNA binding"/>
    <property type="evidence" value="ECO:0007669"/>
    <property type="project" value="TreeGrafter"/>
</dbReference>
<dbReference type="GO" id="GO:0003735">
    <property type="term" value="F:structural constituent of ribosome"/>
    <property type="evidence" value="ECO:0007669"/>
    <property type="project" value="InterPro"/>
</dbReference>
<dbReference type="GO" id="GO:0006412">
    <property type="term" value="P:translation"/>
    <property type="evidence" value="ECO:0007669"/>
    <property type="project" value="UniProtKB-UniRule"/>
</dbReference>
<dbReference type="CDD" id="cd00387">
    <property type="entry name" value="Ribosomal_L7_L12"/>
    <property type="match status" value="1"/>
</dbReference>
<dbReference type="FunFam" id="1.20.5.710:FF:000008">
    <property type="entry name" value="50S ribosomal protein L7/L12"/>
    <property type="match status" value="1"/>
</dbReference>
<dbReference type="FunFam" id="3.30.1390.10:FF:000001">
    <property type="entry name" value="50S ribosomal protein L7/L12"/>
    <property type="match status" value="1"/>
</dbReference>
<dbReference type="Gene3D" id="3.30.1390.10">
    <property type="match status" value="1"/>
</dbReference>
<dbReference type="Gene3D" id="1.20.5.710">
    <property type="entry name" value="Single helix bin"/>
    <property type="match status" value="1"/>
</dbReference>
<dbReference type="HAMAP" id="MF_00368">
    <property type="entry name" value="Ribosomal_bL12"/>
    <property type="match status" value="1"/>
</dbReference>
<dbReference type="InterPro" id="IPR000206">
    <property type="entry name" value="Ribosomal_bL12"/>
</dbReference>
<dbReference type="InterPro" id="IPR013823">
    <property type="entry name" value="Ribosomal_bL12_C"/>
</dbReference>
<dbReference type="InterPro" id="IPR014719">
    <property type="entry name" value="Ribosomal_bL12_C/ClpS-like"/>
</dbReference>
<dbReference type="InterPro" id="IPR008932">
    <property type="entry name" value="Ribosomal_bL12_oligo"/>
</dbReference>
<dbReference type="InterPro" id="IPR036235">
    <property type="entry name" value="Ribosomal_bL12_oligo_N_sf"/>
</dbReference>
<dbReference type="NCBIfam" id="TIGR00855">
    <property type="entry name" value="L12"/>
    <property type="match status" value="1"/>
</dbReference>
<dbReference type="PANTHER" id="PTHR45987">
    <property type="entry name" value="39S RIBOSOMAL PROTEIN L12"/>
    <property type="match status" value="1"/>
</dbReference>
<dbReference type="PANTHER" id="PTHR45987:SF4">
    <property type="entry name" value="LARGE RIBOSOMAL SUBUNIT PROTEIN BL12M"/>
    <property type="match status" value="1"/>
</dbReference>
<dbReference type="Pfam" id="PF00542">
    <property type="entry name" value="Ribosomal_L12"/>
    <property type="match status" value="1"/>
</dbReference>
<dbReference type="Pfam" id="PF16320">
    <property type="entry name" value="Ribosomal_L12_N"/>
    <property type="match status" value="1"/>
</dbReference>
<dbReference type="SUPFAM" id="SSF54736">
    <property type="entry name" value="ClpS-like"/>
    <property type="match status" value="1"/>
</dbReference>
<dbReference type="SUPFAM" id="SSF48300">
    <property type="entry name" value="Ribosomal protein L7/12, oligomerisation (N-terminal) domain"/>
    <property type="match status" value="1"/>
</dbReference>
<protein>
    <recommendedName>
        <fullName evidence="1">Large ribosomal subunit protein bL12</fullName>
    </recommendedName>
    <alternativeName>
        <fullName evidence="2">50S ribosomal protein L7/L12</fullName>
    </alternativeName>
</protein>
<keyword id="KW-0687">Ribonucleoprotein</keyword>
<keyword id="KW-0689">Ribosomal protein</keyword>
<feature type="chain" id="PRO_1000007106" description="Large ribosomal subunit protein bL12">
    <location>
        <begin position="1"/>
        <end position="128"/>
    </location>
</feature>
<sequence length="128" mass="13467">MTIDEIIEAIEKLTVSELAELVKKLEDKFGVTAAAPVAVAAAPVAGAAAGAAQEEKTEFDVVLKSFGQNKIQVIKVVREITGLGLKEAKDLVEKAGSPDAIIKSGVPKQEAEDIKKKLEEAGAEVELK</sequence>
<reference key="1">
    <citation type="submission" date="2007-05" db="EMBL/GenBank/DDBJ databases">
        <title>Complete sequence of Thermotoga petrophila RKU-1.</title>
        <authorList>
            <consortium name="US DOE Joint Genome Institute"/>
            <person name="Copeland A."/>
            <person name="Lucas S."/>
            <person name="Lapidus A."/>
            <person name="Barry K."/>
            <person name="Glavina del Rio T."/>
            <person name="Dalin E."/>
            <person name="Tice H."/>
            <person name="Pitluck S."/>
            <person name="Sims D."/>
            <person name="Brettin T."/>
            <person name="Bruce D."/>
            <person name="Detter J.C."/>
            <person name="Han C."/>
            <person name="Tapia R."/>
            <person name="Schmutz J."/>
            <person name="Larimer F."/>
            <person name="Land M."/>
            <person name="Hauser L."/>
            <person name="Kyrpides N."/>
            <person name="Mikhailova N."/>
            <person name="Nelson K."/>
            <person name="Gogarten J.P."/>
            <person name="Noll K."/>
            <person name="Richardson P."/>
        </authorList>
    </citation>
    <scope>NUCLEOTIDE SEQUENCE [LARGE SCALE GENOMIC DNA]</scope>
    <source>
        <strain>ATCC BAA-488 / DSM 13995 / JCM 10881 / RKU-1</strain>
    </source>
</reference>
<organism>
    <name type="scientific">Thermotoga petrophila (strain ATCC BAA-488 / DSM 13995 / JCM 10881 / RKU-1)</name>
    <dbReference type="NCBI Taxonomy" id="390874"/>
    <lineage>
        <taxon>Bacteria</taxon>
        <taxon>Thermotogati</taxon>
        <taxon>Thermotogota</taxon>
        <taxon>Thermotogae</taxon>
        <taxon>Thermotogales</taxon>
        <taxon>Thermotogaceae</taxon>
        <taxon>Thermotoga</taxon>
    </lineage>
</organism>
<name>RL7_THEP1</name>
<evidence type="ECO:0000255" key="1">
    <source>
        <dbReference type="HAMAP-Rule" id="MF_00368"/>
    </source>
</evidence>
<evidence type="ECO:0000305" key="2"/>